<feature type="signal peptide" evidence="2">
    <location>
        <begin position="1"/>
        <end position="30"/>
    </location>
</feature>
<feature type="chain" id="PRO_5004207952" description="Staphylococcal superantigen-like 10" evidence="2">
    <location>
        <begin position="31"/>
        <end position="227"/>
    </location>
</feature>
<feature type="helix" evidence="9">
    <location>
        <begin position="41"/>
        <end position="49"/>
    </location>
</feature>
<feature type="strand" evidence="9">
    <location>
        <begin position="53"/>
        <end position="64"/>
    </location>
</feature>
<feature type="turn" evidence="9">
    <location>
        <begin position="65"/>
        <end position="67"/>
    </location>
</feature>
<feature type="strand" evidence="9">
    <location>
        <begin position="68"/>
        <end position="73"/>
    </location>
</feature>
<feature type="strand" evidence="9">
    <location>
        <begin position="76"/>
        <end position="81"/>
    </location>
</feature>
<feature type="helix" evidence="9">
    <location>
        <begin position="84"/>
        <end position="89"/>
    </location>
</feature>
<feature type="strand" evidence="9">
    <location>
        <begin position="92"/>
        <end position="103"/>
    </location>
</feature>
<feature type="strand" evidence="9">
    <location>
        <begin position="105"/>
        <end position="107"/>
    </location>
</feature>
<feature type="strand" evidence="9">
    <location>
        <begin position="112"/>
        <end position="117"/>
    </location>
</feature>
<feature type="strand" evidence="9">
    <location>
        <begin position="119"/>
        <end position="122"/>
    </location>
</feature>
<feature type="strand" evidence="9">
    <location>
        <begin position="133"/>
        <end position="137"/>
    </location>
</feature>
<feature type="strand" evidence="10">
    <location>
        <begin position="140"/>
        <end position="143"/>
    </location>
</feature>
<feature type="strand" evidence="9">
    <location>
        <begin position="147"/>
        <end position="150"/>
    </location>
</feature>
<feature type="strand" evidence="9">
    <location>
        <begin position="155"/>
        <end position="159"/>
    </location>
</feature>
<feature type="helix" evidence="9">
    <location>
        <begin position="160"/>
        <end position="175"/>
    </location>
</feature>
<feature type="turn" evidence="9">
    <location>
        <begin position="177"/>
        <end position="179"/>
    </location>
</feature>
<feature type="strand" evidence="9">
    <location>
        <begin position="186"/>
        <end position="191"/>
    </location>
</feature>
<feature type="strand" evidence="9">
    <location>
        <begin position="196"/>
        <end position="200"/>
    </location>
</feature>
<feature type="helix" evidence="9">
    <location>
        <begin position="207"/>
        <end position="209"/>
    </location>
</feature>
<feature type="strand" evidence="9">
    <location>
        <begin position="213"/>
        <end position="215"/>
    </location>
</feature>
<feature type="helix" evidence="9">
    <location>
        <begin position="216"/>
        <end position="218"/>
    </location>
</feature>
<feature type="strand" evidence="9">
    <location>
        <begin position="219"/>
        <end position="225"/>
    </location>
</feature>
<dbReference type="EMBL" id="CP000253">
    <property type="protein sequence ID" value="ABD29558.1"/>
    <property type="molecule type" value="Genomic_DNA"/>
</dbReference>
<dbReference type="RefSeq" id="WP_000673051.1">
    <property type="nucleotide sequence ID" value="NZ_LS483365.1"/>
</dbReference>
<dbReference type="RefSeq" id="YP_498982.1">
    <property type="nucleotide sequence ID" value="NC_007795.1"/>
</dbReference>
<dbReference type="PDB" id="6LWT">
    <property type="method" value="X-ray"/>
    <property type="resolution" value="1.90 A"/>
    <property type="chains" value="A/B=31-227"/>
</dbReference>
<dbReference type="PDB" id="6UCD">
    <property type="method" value="X-ray"/>
    <property type="resolution" value="2.85 A"/>
    <property type="chains" value="A/B=30-227"/>
</dbReference>
<dbReference type="PDBsum" id="6LWT"/>
<dbReference type="PDBsum" id="6UCD"/>
<dbReference type="SMR" id="Q2G2X7"/>
<dbReference type="STRING" id="93061.SAOUHSC_00395"/>
<dbReference type="PaxDb" id="1280-SAXN108_0486"/>
<dbReference type="GeneID" id="3919130"/>
<dbReference type="KEGG" id="sao:SAOUHSC_00395"/>
<dbReference type="PATRIC" id="fig|93061.5.peg.363"/>
<dbReference type="HOGENOM" id="CLU_054950_1_0_9"/>
<dbReference type="OrthoDB" id="2413502at2"/>
<dbReference type="Proteomes" id="UP000008816">
    <property type="component" value="Chromosome"/>
</dbReference>
<dbReference type="GO" id="GO:0005576">
    <property type="term" value="C:extracellular region"/>
    <property type="evidence" value="ECO:0007669"/>
    <property type="project" value="UniProtKB-SubCell"/>
</dbReference>
<dbReference type="Gene3D" id="2.40.50.110">
    <property type="match status" value="1"/>
</dbReference>
<dbReference type="Gene3D" id="3.10.20.120">
    <property type="match status" value="1"/>
</dbReference>
<dbReference type="InterPro" id="IPR008992">
    <property type="entry name" value="Enterotoxin"/>
</dbReference>
<dbReference type="InterPro" id="IPR015282">
    <property type="entry name" value="SSL_OB"/>
</dbReference>
<dbReference type="InterPro" id="IPR006126">
    <property type="entry name" value="Staph/Strept_toxin_CS"/>
</dbReference>
<dbReference type="InterPro" id="IPR008375">
    <property type="entry name" value="Staph_exotoxin"/>
</dbReference>
<dbReference type="InterPro" id="IPR016091">
    <property type="entry name" value="SuperAg_toxin_C"/>
</dbReference>
<dbReference type="InterPro" id="IPR013307">
    <property type="entry name" value="Superantigen_bac"/>
</dbReference>
<dbReference type="InterPro" id="IPR006123">
    <property type="entry name" value="Toxin_b-grasp_Staph/Strep"/>
</dbReference>
<dbReference type="NCBIfam" id="NF009596">
    <property type="entry name" value="PRK13038.1"/>
    <property type="match status" value="1"/>
</dbReference>
<dbReference type="Pfam" id="PF09199">
    <property type="entry name" value="SSL_OB"/>
    <property type="match status" value="1"/>
</dbReference>
<dbReference type="Pfam" id="PF02876">
    <property type="entry name" value="Stap_Strp_tox_C"/>
    <property type="match status" value="1"/>
</dbReference>
<dbReference type="PRINTS" id="PR01898">
    <property type="entry name" value="SAGSUPRFAMLY"/>
</dbReference>
<dbReference type="PRINTS" id="PR01800">
    <property type="entry name" value="STAPHEXOTOXN"/>
</dbReference>
<dbReference type="PRINTS" id="PR01501">
    <property type="entry name" value="TOXICSSTOXIN"/>
</dbReference>
<dbReference type="SUPFAM" id="SSF50203">
    <property type="entry name" value="Bacterial enterotoxins"/>
    <property type="match status" value="1"/>
</dbReference>
<dbReference type="SUPFAM" id="SSF54334">
    <property type="entry name" value="Superantigen toxins, C-terminal domain"/>
    <property type="match status" value="1"/>
</dbReference>
<dbReference type="PROSITE" id="PS00278">
    <property type="entry name" value="STAPH_STREP_TOXIN_2"/>
    <property type="match status" value="1"/>
</dbReference>
<sequence length="227" mass="26111">MKFTALAKATLALGILTTGTLTTEVHSGHAKQNQKSVNKHDKEALYRYYTGKTMEMKNISALKHGKNNLRFKFRGIKIQVLLPGNDKSKFQQRSYEGLDVFFVQEKRDKHDIFYTVGGVIQNNKTSGVVSAPILNISKEKGEDAFVKGYPYYIKKEKITLKELDYKLRKHLIEKYGLYKTISKDGRVKISLKDGSFYNLDLRSKLKFKYMGEVIESKQIKDIEVNLK</sequence>
<keyword id="KW-0002">3D-structure</keyword>
<keyword id="KW-1185">Reference proteome</keyword>
<keyword id="KW-0964">Secreted</keyword>
<keyword id="KW-0732">Signal</keyword>
<keyword id="KW-0843">Virulence</keyword>
<accession>Q2G2X7</accession>
<protein>
    <recommendedName>
        <fullName evidence="7">Staphylococcal superantigen-like 10</fullName>
    </recommendedName>
</protein>
<comment type="function">
    <text evidence="3 4 5 6">Plays a role in the inhibition of host complement activation via the classical pathway by interacting with the Fc region of human IgG and thereby interfering with the IgG/C1q interaction (PubMed:19913916). Also inhibits the penultimate step of plasma clotting by interacting with prothrombin/F2 and coagulation factor X/F12. Does not affect the protease activity of thrombin but interferes with the conversion of prothrombin to thrombin (PubMed:23754290, PubMed:28193526). Interacts with human receptor CXCR4 and specifically inhibits CXCL12-induced calcium mobilization and cell migration (PubMed:19308288).</text>
</comment>
<comment type="subunit">
    <text evidence="3 5 6">Interacts with prothrombin/F2 and coagulation factor X/F12 (PubMed:23754290, PubMed:28193526). Interacts with human CXCR4 (PubMed:19308288).</text>
</comment>
<comment type="subcellular location">
    <subcellularLocation>
        <location evidence="1">Secreted</location>
    </subcellularLocation>
</comment>
<comment type="similarity">
    <text evidence="8">Belongs to the staphylococcal/streptococcal toxin family.</text>
</comment>
<organism>
    <name type="scientific">Staphylococcus aureus (strain NCTC 8325 / PS 47)</name>
    <dbReference type="NCBI Taxonomy" id="93061"/>
    <lineage>
        <taxon>Bacteria</taxon>
        <taxon>Bacillati</taxon>
        <taxon>Bacillota</taxon>
        <taxon>Bacilli</taxon>
        <taxon>Bacillales</taxon>
        <taxon>Staphylococcaceae</taxon>
        <taxon>Staphylococcus</taxon>
    </lineage>
</organism>
<evidence type="ECO:0000250" key="1">
    <source>
        <dbReference type="UniProtKB" id="Q2G1S8"/>
    </source>
</evidence>
<evidence type="ECO:0000255" key="2"/>
<evidence type="ECO:0000269" key="3">
    <source>
    </source>
</evidence>
<evidence type="ECO:0000269" key="4">
    <source>
    </source>
</evidence>
<evidence type="ECO:0000269" key="5">
    <source>
    </source>
</evidence>
<evidence type="ECO:0000269" key="6">
    <source>
    </source>
</evidence>
<evidence type="ECO:0000303" key="7">
    <source>
    </source>
</evidence>
<evidence type="ECO:0000305" key="8"/>
<evidence type="ECO:0007829" key="9">
    <source>
        <dbReference type="PDB" id="6LWT"/>
    </source>
</evidence>
<evidence type="ECO:0007829" key="10">
    <source>
        <dbReference type="PDB" id="6UCD"/>
    </source>
</evidence>
<name>SSL10_STAA8</name>
<reference key="1">
    <citation type="book" date="2006" name="Gram positive pathogens, 2nd edition">
        <title>The Staphylococcus aureus NCTC 8325 genome.</title>
        <editorList>
            <person name="Fischetti V."/>
            <person name="Novick R."/>
            <person name="Ferretti J."/>
            <person name="Portnoy D."/>
            <person name="Rood J."/>
        </editorList>
        <authorList>
            <person name="Gillaspy A.F."/>
            <person name="Worrell V."/>
            <person name="Orvis J."/>
            <person name="Roe B.A."/>
            <person name="Dyer D.W."/>
            <person name="Iandolo J.J."/>
        </authorList>
    </citation>
    <scope>NUCLEOTIDE SEQUENCE [LARGE SCALE GENOMIC DNA]</scope>
    <source>
        <strain>NCTC 8325 / PS 47</strain>
    </source>
</reference>
<reference key="2">
    <citation type="journal article" date="2009" name="Neoplasia">
        <title>Staphylococcal superantigen-like 10 inhibits CXCL12-induced human tumor cell migration.</title>
        <authorList>
            <person name="Walenkamp A.M."/>
            <person name="Boer I.G."/>
            <person name="Bestebroer J."/>
            <person name="Rozeveld D."/>
            <person name="Timmer-Bosscha H."/>
            <person name="Hemrika W."/>
            <person name="van Strijp J.A."/>
            <person name="de Haas C.J."/>
        </authorList>
    </citation>
    <scope>FUNCTION</scope>
    <scope>INTERACTION WITH HUMAN CXCR4</scope>
    <source>
        <strain>NCTC 8325 / PS 47</strain>
    </source>
</reference>
<reference key="3">
    <citation type="journal article" date="2010" name="Mol. Immunol.">
        <title>Staphylococcal superantigen-like protein 10 (SSL10) binds to human immunoglobulin G (IgG) and inhibits complement activation via the classical pathway.</title>
        <authorList>
            <person name="Itoh S."/>
            <person name="Hamada E."/>
            <person name="Kamoshida G."/>
            <person name="Yokoyama R."/>
            <person name="Takii T."/>
            <person name="Onozaki K."/>
            <person name="Tsuji T."/>
        </authorList>
    </citation>
    <scope>FUNCTION</scope>
    <source>
        <strain>ATCC 277933</strain>
    </source>
</reference>
<reference key="4">
    <citation type="journal article" date="2013" name="J. Biol. Chem.">
        <title>Staphylococcal superantigen-like protein 10 (SSL10) inhibits blood coagulation by binding to prothrombin and factor Xa via their gamma-carboxyglutamic acid (Gla) domain.</title>
        <authorList>
            <person name="Itoh S."/>
            <person name="Yokoyama R."/>
            <person name="Kamoshida G."/>
            <person name="Fujiwara T."/>
            <person name="Okada H."/>
            <person name="Takii T."/>
            <person name="Tsuji T."/>
            <person name="Fujii S."/>
            <person name="Hashizume H."/>
            <person name="Onozaki K."/>
        </authorList>
    </citation>
    <scope>FUNCTION</scope>
    <scope>INTERACTION WITH HOST PROTHROMBIN/F2</scope>
    <source>
        <strain>ATCC 277933</strain>
    </source>
</reference>
<reference key="5">
    <citation type="journal article" date="2017" name="Biochem. Biophys. Res. Commun.">
        <title>Identification of the blood coagulation factor interacting sequences in staphylococcal superantigen-like protein 10.</title>
        <authorList>
            <person name="Itoh S."/>
            <person name="Takii T."/>
            <person name="Onozaki K."/>
            <person name="Tsuji T."/>
            <person name="Hida S."/>
        </authorList>
    </citation>
    <scope>FUNCTION</scope>
    <scope>INTERACTION WITH HOST PROTHROMBIN/F2</scope>
    <source>
        <strain>ATCC 277933</strain>
    </source>
</reference>
<gene>
    <name evidence="7" type="primary">ssl10</name>
    <name type="ordered locus">SAOUHSC_00395</name>
</gene>
<proteinExistence type="evidence at protein level"/>